<sequence>MQARFHTSWAELPASLQFALEPILSAENFPAMLTAEQVKTVKNISGLDDDALAFALLPLATACALTPISHFNVGAIARGKSGNFYFGANMEFRGVPLQQTIHAEQCAVTHAWLRGETNLVAITVNYTPCGHCRQFMNELNSGSELHIHLPGRPPSTLGQYLPDSFGPTDLAITTLLMDPVNHGYTLAETDPLTQAALNAANHSHAPYSQSHSGVALETTNGKIYAGRYAENAAFNPSLPPLQAALILANITGENCASIRRAVLVEGHNAVTSQWDTTLATLNALGCSAVKRVTF</sequence>
<name>CDD_YERPA</name>
<protein>
    <recommendedName>
        <fullName evidence="1">Cytidine deaminase</fullName>
        <ecNumber evidence="1">3.5.4.5</ecNumber>
    </recommendedName>
    <alternativeName>
        <fullName evidence="1">Cytidine aminohydrolase</fullName>
        <shortName evidence="1">CDA</shortName>
    </alternativeName>
</protein>
<reference key="1">
    <citation type="journal article" date="2006" name="J. Bacteriol.">
        <title>Complete genome sequence of Yersinia pestis strains Antiqua and Nepal516: evidence of gene reduction in an emerging pathogen.</title>
        <authorList>
            <person name="Chain P.S.G."/>
            <person name="Hu P."/>
            <person name="Malfatti S.A."/>
            <person name="Radnedge L."/>
            <person name="Larimer F."/>
            <person name="Vergez L.M."/>
            <person name="Worsham P."/>
            <person name="Chu M.C."/>
            <person name="Andersen G.L."/>
        </authorList>
    </citation>
    <scope>NUCLEOTIDE SEQUENCE [LARGE SCALE GENOMIC DNA]</scope>
    <source>
        <strain>Antiqua</strain>
    </source>
</reference>
<comment type="function">
    <text evidence="1">This enzyme scavenges exogenous and endogenous cytidine and 2'-deoxycytidine for UMP synthesis.</text>
</comment>
<comment type="catalytic activity">
    <reaction evidence="1">
        <text>cytidine + H2O + H(+) = uridine + NH4(+)</text>
        <dbReference type="Rhea" id="RHEA:16069"/>
        <dbReference type="ChEBI" id="CHEBI:15377"/>
        <dbReference type="ChEBI" id="CHEBI:15378"/>
        <dbReference type="ChEBI" id="CHEBI:16704"/>
        <dbReference type="ChEBI" id="CHEBI:17562"/>
        <dbReference type="ChEBI" id="CHEBI:28938"/>
        <dbReference type="EC" id="3.5.4.5"/>
    </reaction>
</comment>
<comment type="catalytic activity">
    <reaction evidence="1">
        <text>2'-deoxycytidine + H2O + H(+) = 2'-deoxyuridine + NH4(+)</text>
        <dbReference type="Rhea" id="RHEA:13433"/>
        <dbReference type="ChEBI" id="CHEBI:15377"/>
        <dbReference type="ChEBI" id="CHEBI:15378"/>
        <dbReference type="ChEBI" id="CHEBI:15698"/>
        <dbReference type="ChEBI" id="CHEBI:16450"/>
        <dbReference type="ChEBI" id="CHEBI:28938"/>
        <dbReference type="EC" id="3.5.4.5"/>
    </reaction>
</comment>
<comment type="cofactor">
    <cofactor evidence="1">
        <name>Zn(2+)</name>
        <dbReference type="ChEBI" id="CHEBI:29105"/>
    </cofactor>
    <text evidence="1">Binds 1 zinc ion.</text>
</comment>
<comment type="subunit">
    <text evidence="1">Homodimer.</text>
</comment>
<comment type="similarity">
    <text evidence="1">Belongs to the cytidine and deoxycytidylate deaminase family.</text>
</comment>
<organism>
    <name type="scientific">Yersinia pestis bv. Antiqua (strain Antiqua)</name>
    <dbReference type="NCBI Taxonomy" id="360102"/>
    <lineage>
        <taxon>Bacteria</taxon>
        <taxon>Pseudomonadati</taxon>
        <taxon>Pseudomonadota</taxon>
        <taxon>Gammaproteobacteria</taxon>
        <taxon>Enterobacterales</taxon>
        <taxon>Yersiniaceae</taxon>
        <taxon>Yersinia</taxon>
    </lineage>
</organism>
<feature type="chain" id="PRO_1000068973" description="Cytidine deaminase">
    <location>
        <begin position="1"/>
        <end position="294"/>
    </location>
</feature>
<feature type="domain" description="CMP/dCMP-type deaminase 1" evidence="2">
    <location>
        <begin position="48"/>
        <end position="168"/>
    </location>
</feature>
<feature type="domain" description="CMP/dCMP-type deaminase 2" evidence="2">
    <location>
        <begin position="187"/>
        <end position="294"/>
    </location>
</feature>
<feature type="active site" description="Proton donor" evidence="1">
    <location>
        <position position="104"/>
    </location>
</feature>
<feature type="binding site" evidence="1">
    <location>
        <begin position="89"/>
        <end position="91"/>
    </location>
    <ligand>
        <name>substrate</name>
    </ligand>
</feature>
<feature type="binding site" evidence="1">
    <location>
        <position position="102"/>
    </location>
    <ligand>
        <name>Zn(2+)</name>
        <dbReference type="ChEBI" id="CHEBI:29105"/>
        <note>catalytic</note>
    </ligand>
</feature>
<feature type="binding site" evidence="1">
    <location>
        <position position="129"/>
    </location>
    <ligand>
        <name>Zn(2+)</name>
        <dbReference type="ChEBI" id="CHEBI:29105"/>
        <note>catalytic</note>
    </ligand>
</feature>
<feature type="binding site" evidence="1">
    <location>
        <position position="132"/>
    </location>
    <ligand>
        <name>Zn(2+)</name>
        <dbReference type="ChEBI" id="CHEBI:29105"/>
        <note>catalytic</note>
    </ligand>
</feature>
<proteinExistence type="inferred from homology"/>
<evidence type="ECO:0000255" key="1">
    <source>
        <dbReference type="HAMAP-Rule" id="MF_01558"/>
    </source>
</evidence>
<evidence type="ECO:0000255" key="2">
    <source>
        <dbReference type="PROSITE-ProRule" id="PRU01083"/>
    </source>
</evidence>
<accession>Q1C9U7</accession>
<gene>
    <name evidence="1" type="primary">cdd</name>
    <name type="ordered locus">YPA_0807</name>
</gene>
<dbReference type="EC" id="3.5.4.5" evidence="1"/>
<dbReference type="EMBL" id="CP000308">
    <property type="protein sequence ID" value="ABG12775.1"/>
    <property type="molecule type" value="Genomic_DNA"/>
</dbReference>
<dbReference type="RefSeq" id="WP_002211969.1">
    <property type="nucleotide sequence ID" value="NZ_CP009906.1"/>
</dbReference>
<dbReference type="SMR" id="Q1C9U7"/>
<dbReference type="GeneID" id="57977056"/>
<dbReference type="KEGG" id="ypa:YPA_0807"/>
<dbReference type="Proteomes" id="UP000001971">
    <property type="component" value="Chromosome"/>
</dbReference>
<dbReference type="GO" id="GO:0005829">
    <property type="term" value="C:cytosol"/>
    <property type="evidence" value="ECO:0007669"/>
    <property type="project" value="TreeGrafter"/>
</dbReference>
<dbReference type="GO" id="GO:0004126">
    <property type="term" value="F:cytidine deaminase activity"/>
    <property type="evidence" value="ECO:0007669"/>
    <property type="project" value="UniProtKB-UniRule"/>
</dbReference>
<dbReference type="GO" id="GO:0042802">
    <property type="term" value="F:identical protein binding"/>
    <property type="evidence" value="ECO:0007669"/>
    <property type="project" value="UniProtKB-ARBA"/>
</dbReference>
<dbReference type="GO" id="GO:0008270">
    <property type="term" value="F:zinc ion binding"/>
    <property type="evidence" value="ECO:0007669"/>
    <property type="project" value="UniProtKB-UniRule"/>
</dbReference>
<dbReference type="GO" id="GO:0009972">
    <property type="term" value="P:cytidine deamination"/>
    <property type="evidence" value="ECO:0007669"/>
    <property type="project" value="InterPro"/>
</dbReference>
<dbReference type="CDD" id="cd01283">
    <property type="entry name" value="cytidine_deaminase"/>
    <property type="match status" value="2"/>
</dbReference>
<dbReference type="FunFam" id="3.40.140.10:FF:000006">
    <property type="entry name" value="Cytidine deaminase"/>
    <property type="match status" value="1"/>
</dbReference>
<dbReference type="FunFam" id="3.40.140.10:FF:000007">
    <property type="entry name" value="Cytidine deaminase"/>
    <property type="match status" value="1"/>
</dbReference>
<dbReference type="Gene3D" id="3.40.140.10">
    <property type="entry name" value="Cytidine Deaminase, domain 2"/>
    <property type="match status" value="2"/>
</dbReference>
<dbReference type="HAMAP" id="MF_01558">
    <property type="entry name" value="Cyt_deam"/>
    <property type="match status" value="1"/>
</dbReference>
<dbReference type="InterPro" id="IPR016192">
    <property type="entry name" value="APOBEC/CMP_deaminase_Zn-bd"/>
</dbReference>
<dbReference type="InterPro" id="IPR002125">
    <property type="entry name" value="CMP_dCMP_dom"/>
</dbReference>
<dbReference type="InterPro" id="IPR013171">
    <property type="entry name" value="Cyd/dCyd_deaminase_Zn-bd"/>
</dbReference>
<dbReference type="InterPro" id="IPR050202">
    <property type="entry name" value="Cyt/Deoxycyt_deaminase"/>
</dbReference>
<dbReference type="InterPro" id="IPR006263">
    <property type="entry name" value="Cyt_deam_dimer"/>
</dbReference>
<dbReference type="InterPro" id="IPR016193">
    <property type="entry name" value="Cytidine_deaminase-like"/>
</dbReference>
<dbReference type="InterPro" id="IPR020797">
    <property type="entry name" value="Cytidine_deaminase_bacteria"/>
</dbReference>
<dbReference type="NCBIfam" id="TIGR01355">
    <property type="entry name" value="cyt_deam_dimer"/>
    <property type="match status" value="1"/>
</dbReference>
<dbReference type="NCBIfam" id="NF006537">
    <property type="entry name" value="PRK09027.1"/>
    <property type="match status" value="1"/>
</dbReference>
<dbReference type="PANTHER" id="PTHR11644">
    <property type="entry name" value="CYTIDINE DEAMINASE"/>
    <property type="match status" value="1"/>
</dbReference>
<dbReference type="PANTHER" id="PTHR11644:SF2">
    <property type="entry name" value="CYTIDINE DEAMINASE"/>
    <property type="match status" value="1"/>
</dbReference>
<dbReference type="Pfam" id="PF00383">
    <property type="entry name" value="dCMP_cyt_deam_1"/>
    <property type="match status" value="1"/>
</dbReference>
<dbReference type="Pfam" id="PF08211">
    <property type="entry name" value="dCMP_cyt_deam_2"/>
    <property type="match status" value="1"/>
</dbReference>
<dbReference type="PIRSF" id="PIRSF006334">
    <property type="entry name" value="Cdd_plus_pseudo"/>
    <property type="match status" value="1"/>
</dbReference>
<dbReference type="SUPFAM" id="SSF53927">
    <property type="entry name" value="Cytidine deaminase-like"/>
    <property type="match status" value="2"/>
</dbReference>
<dbReference type="PROSITE" id="PS00903">
    <property type="entry name" value="CYT_DCMP_DEAMINASES_1"/>
    <property type="match status" value="1"/>
</dbReference>
<dbReference type="PROSITE" id="PS51747">
    <property type="entry name" value="CYT_DCMP_DEAMINASES_2"/>
    <property type="match status" value="2"/>
</dbReference>
<keyword id="KW-0378">Hydrolase</keyword>
<keyword id="KW-0479">Metal-binding</keyword>
<keyword id="KW-0862">Zinc</keyword>